<organism>
    <name type="scientific">Cuscuta exaltata</name>
    <name type="common">Tall dodder</name>
    <dbReference type="NCBI Taxonomy" id="476139"/>
    <lineage>
        <taxon>Eukaryota</taxon>
        <taxon>Viridiplantae</taxon>
        <taxon>Streptophyta</taxon>
        <taxon>Embryophyta</taxon>
        <taxon>Tracheophyta</taxon>
        <taxon>Spermatophyta</taxon>
        <taxon>Magnoliopsida</taxon>
        <taxon>eudicotyledons</taxon>
        <taxon>Gunneridae</taxon>
        <taxon>Pentapetalae</taxon>
        <taxon>asterids</taxon>
        <taxon>lamiids</taxon>
        <taxon>Solanales</taxon>
        <taxon>Convolvulaceae</taxon>
        <taxon>Cuscuteae</taxon>
        <taxon>Cuscuta</taxon>
        <taxon>Cuscuta subgen. Monogynella</taxon>
    </lineage>
</organism>
<evidence type="ECO:0000250" key="1"/>
<evidence type="ECO:0000255" key="2">
    <source>
        <dbReference type="HAMAP-Rule" id="MF_01347"/>
    </source>
</evidence>
<evidence type="ECO:0000305" key="3"/>
<gene>
    <name evidence="2" type="primary">atpB</name>
</gene>
<comment type="function">
    <text evidence="2">Produces ATP from ADP in the presence of a proton gradient across the membrane. The catalytic sites are hosted primarily by the beta subunits.</text>
</comment>
<comment type="catalytic activity">
    <reaction evidence="2">
        <text>ATP + H2O + 4 H(+)(in) = ADP + phosphate + 5 H(+)(out)</text>
        <dbReference type="Rhea" id="RHEA:57720"/>
        <dbReference type="ChEBI" id="CHEBI:15377"/>
        <dbReference type="ChEBI" id="CHEBI:15378"/>
        <dbReference type="ChEBI" id="CHEBI:30616"/>
        <dbReference type="ChEBI" id="CHEBI:43474"/>
        <dbReference type="ChEBI" id="CHEBI:456216"/>
        <dbReference type="EC" id="7.1.2.2"/>
    </reaction>
</comment>
<comment type="subunit">
    <text evidence="2">F-type ATPases have 2 components, CF(1) - the catalytic core - and CF(0) - the membrane proton channel. CF(1) has five subunits: alpha(3), beta(3), gamma(1), delta(1), epsilon(1). CF(0) has four main subunits: a(1), b(1), b'(1) and c(9-12).</text>
</comment>
<comment type="subcellular location">
    <subcellularLocation>
        <location evidence="1">Plastid membrane</location>
        <topology evidence="2">Peripheral membrane protein</topology>
    </subcellularLocation>
</comment>
<comment type="similarity">
    <text evidence="2">Belongs to the ATPase alpha/beta chains family.</text>
</comment>
<comment type="caution">
    <text evidence="3">Young tissue from this organism is photosynthetic and contains some thylakoids, although the photosynthetic activity does not exceed the light compensation point.</text>
</comment>
<accession>A8W3D7</accession>
<dbReference type="EC" id="7.1.2.2" evidence="2"/>
<dbReference type="EMBL" id="EU189132">
    <property type="protein sequence ID" value="ABW83708.1"/>
    <property type="molecule type" value="Genomic_DNA"/>
</dbReference>
<dbReference type="RefSeq" id="YP_001542544.1">
    <property type="nucleotide sequence ID" value="NC_009963.1"/>
</dbReference>
<dbReference type="SMR" id="A8W3D7"/>
<dbReference type="GeneID" id="5729683"/>
<dbReference type="GO" id="GO:0009535">
    <property type="term" value="C:chloroplast thylakoid membrane"/>
    <property type="evidence" value="ECO:0007669"/>
    <property type="project" value="TreeGrafter"/>
</dbReference>
<dbReference type="GO" id="GO:0005739">
    <property type="term" value="C:mitochondrion"/>
    <property type="evidence" value="ECO:0007669"/>
    <property type="project" value="GOC"/>
</dbReference>
<dbReference type="GO" id="GO:0045259">
    <property type="term" value="C:proton-transporting ATP synthase complex"/>
    <property type="evidence" value="ECO:0007669"/>
    <property type="project" value="UniProtKB-KW"/>
</dbReference>
<dbReference type="GO" id="GO:0005524">
    <property type="term" value="F:ATP binding"/>
    <property type="evidence" value="ECO:0007669"/>
    <property type="project" value="UniProtKB-KW"/>
</dbReference>
<dbReference type="GO" id="GO:0016887">
    <property type="term" value="F:ATP hydrolysis activity"/>
    <property type="evidence" value="ECO:0007669"/>
    <property type="project" value="InterPro"/>
</dbReference>
<dbReference type="GO" id="GO:0046933">
    <property type="term" value="F:proton-transporting ATP synthase activity, rotational mechanism"/>
    <property type="evidence" value="ECO:0007669"/>
    <property type="project" value="InterPro"/>
</dbReference>
<dbReference type="GO" id="GO:0042776">
    <property type="term" value="P:proton motive force-driven mitochondrial ATP synthesis"/>
    <property type="evidence" value="ECO:0007669"/>
    <property type="project" value="TreeGrafter"/>
</dbReference>
<dbReference type="CDD" id="cd18110">
    <property type="entry name" value="ATP-synt_F1_beta_C"/>
    <property type="match status" value="1"/>
</dbReference>
<dbReference type="CDD" id="cd18115">
    <property type="entry name" value="ATP-synt_F1_beta_N"/>
    <property type="match status" value="1"/>
</dbReference>
<dbReference type="CDD" id="cd01133">
    <property type="entry name" value="F1-ATPase_beta_CD"/>
    <property type="match status" value="1"/>
</dbReference>
<dbReference type="FunFam" id="1.10.1140.10:FF:000001">
    <property type="entry name" value="ATP synthase subunit beta"/>
    <property type="match status" value="1"/>
</dbReference>
<dbReference type="FunFam" id="3.40.50.300:FF:000004">
    <property type="entry name" value="ATP synthase subunit beta"/>
    <property type="match status" value="1"/>
</dbReference>
<dbReference type="FunFam" id="2.40.10.170:FF:000002">
    <property type="entry name" value="ATP synthase subunit beta, chloroplastic"/>
    <property type="match status" value="1"/>
</dbReference>
<dbReference type="Gene3D" id="2.40.10.170">
    <property type="match status" value="1"/>
</dbReference>
<dbReference type="Gene3D" id="1.10.1140.10">
    <property type="entry name" value="Bovine Mitochondrial F1-atpase, Atp Synthase Beta Chain, Chain D, domain 3"/>
    <property type="match status" value="1"/>
</dbReference>
<dbReference type="Gene3D" id="3.40.50.300">
    <property type="entry name" value="P-loop containing nucleotide triphosphate hydrolases"/>
    <property type="match status" value="1"/>
</dbReference>
<dbReference type="HAMAP" id="MF_01347">
    <property type="entry name" value="ATP_synth_beta_bact"/>
    <property type="match status" value="1"/>
</dbReference>
<dbReference type="InterPro" id="IPR003593">
    <property type="entry name" value="AAA+_ATPase"/>
</dbReference>
<dbReference type="InterPro" id="IPR055190">
    <property type="entry name" value="ATP-synt_VA_C"/>
</dbReference>
<dbReference type="InterPro" id="IPR005722">
    <property type="entry name" value="ATP_synth_F1_bsu"/>
</dbReference>
<dbReference type="InterPro" id="IPR020003">
    <property type="entry name" value="ATPase_a/bsu_AS"/>
</dbReference>
<dbReference type="InterPro" id="IPR050053">
    <property type="entry name" value="ATPase_alpha/beta_chains"/>
</dbReference>
<dbReference type="InterPro" id="IPR004100">
    <property type="entry name" value="ATPase_F1/V1/A1_a/bsu_N"/>
</dbReference>
<dbReference type="InterPro" id="IPR036121">
    <property type="entry name" value="ATPase_F1/V1/A1_a/bsu_N_sf"/>
</dbReference>
<dbReference type="InterPro" id="IPR000194">
    <property type="entry name" value="ATPase_F1/V1/A1_a/bsu_nucl-bd"/>
</dbReference>
<dbReference type="InterPro" id="IPR024034">
    <property type="entry name" value="ATPase_F1/V1_b/a_C"/>
</dbReference>
<dbReference type="InterPro" id="IPR027417">
    <property type="entry name" value="P-loop_NTPase"/>
</dbReference>
<dbReference type="NCBIfam" id="TIGR01039">
    <property type="entry name" value="atpD"/>
    <property type="match status" value="1"/>
</dbReference>
<dbReference type="PANTHER" id="PTHR15184">
    <property type="entry name" value="ATP SYNTHASE"/>
    <property type="match status" value="1"/>
</dbReference>
<dbReference type="PANTHER" id="PTHR15184:SF71">
    <property type="entry name" value="ATP SYNTHASE SUBUNIT BETA, MITOCHONDRIAL"/>
    <property type="match status" value="1"/>
</dbReference>
<dbReference type="Pfam" id="PF00006">
    <property type="entry name" value="ATP-synt_ab"/>
    <property type="match status" value="1"/>
</dbReference>
<dbReference type="Pfam" id="PF02874">
    <property type="entry name" value="ATP-synt_ab_N"/>
    <property type="match status" value="1"/>
</dbReference>
<dbReference type="Pfam" id="PF22919">
    <property type="entry name" value="ATP-synt_VA_C"/>
    <property type="match status" value="1"/>
</dbReference>
<dbReference type="SMART" id="SM00382">
    <property type="entry name" value="AAA"/>
    <property type="match status" value="1"/>
</dbReference>
<dbReference type="SUPFAM" id="SSF47917">
    <property type="entry name" value="C-terminal domain of alpha and beta subunits of F1 ATP synthase"/>
    <property type="match status" value="1"/>
</dbReference>
<dbReference type="SUPFAM" id="SSF50615">
    <property type="entry name" value="N-terminal domain of alpha and beta subunits of F1 ATP synthase"/>
    <property type="match status" value="1"/>
</dbReference>
<dbReference type="SUPFAM" id="SSF52540">
    <property type="entry name" value="P-loop containing nucleoside triphosphate hydrolases"/>
    <property type="match status" value="1"/>
</dbReference>
<dbReference type="PROSITE" id="PS00152">
    <property type="entry name" value="ATPASE_ALPHA_BETA"/>
    <property type="match status" value="1"/>
</dbReference>
<geneLocation type="plastid"/>
<reference key="1">
    <citation type="journal article" date="2007" name="BMC Plant Biol.">
        <title>Complete plastid genome sequences suggest strong selection for retention of photosynthetic genes in the parasitic plant genus Cuscuta.</title>
        <authorList>
            <person name="McNeal J.R."/>
            <person name="Kuehl J.V."/>
            <person name="Boore J.L."/>
            <person name="dePamphilis C.W."/>
        </authorList>
    </citation>
    <scope>NUCLEOTIDE SEQUENCE [LARGE SCALE GENOMIC DNA]</scope>
</reference>
<sequence>MRINPTTYGSEISLIEKKNRGRIVQIIGPVLDVAFPPGKMPNIYNALVVKGRDTEQMNVTCEVQQLLGNNRVRAVAMNDTDGLMRGMEVIDMGTPITVPVGGSTLGRIFNVLGEPVDNFGPVDTNTTSTIHRSAPAFIQLDTKLSIFETGIKVVDLLAPYRRGGKIGLFGGAGVGKTVLIMELINNIAKAHGGVSVFGGVGERTREGNDLYMEMKESGVINEKNITESKVALVYGQMNEPPGARMRVGLTALTMAEYFRDVNEQDVLLFIDNIFRFVQAGSEVSALLGRMPSAVGYQPTLSTEMGSLQERITSTKEGSITSIQAVYVPADDLTDPAPATTFAHLDATTVLSRGLAAKGIYPAVDPLDSTSMMLQPRIVGEEHYETAQKVKQTLQRYKELQDIIAILGLDELSEEDRLTVARARKIERFLSQPFFVAEVFTGSPGKYVGLAETIRGFNLILSGELDSLPEQAFYLVGNIDEATKKAMDLKT</sequence>
<protein>
    <recommendedName>
        <fullName evidence="2">ATP synthase subunit beta, plastid</fullName>
        <ecNumber evidence="2">7.1.2.2</ecNumber>
    </recommendedName>
    <alternativeName>
        <fullName evidence="2">ATP synthase F1 sector subunit beta</fullName>
    </alternativeName>
    <alternativeName>
        <fullName evidence="2">F-ATPase subunit beta</fullName>
    </alternativeName>
</protein>
<name>ATPB_CUSEX</name>
<proteinExistence type="inferred from homology"/>
<feature type="chain" id="PRO_0000339615" description="ATP synthase subunit beta, plastid">
    <location>
        <begin position="1"/>
        <end position="490"/>
    </location>
</feature>
<feature type="binding site" evidence="2">
    <location>
        <begin position="170"/>
        <end position="177"/>
    </location>
    <ligand>
        <name>ATP</name>
        <dbReference type="ChEBI" id="CHEBI:30616"/>
    </ligand>
</feature>
<keyword id="KW-0066">ATP synthesis</keyword>
<keyword id="KW-0067">ATP-binding</keyword>
<keyword id="KW-0139">CF(1)</keyword>
<keyword id="KW-0375">Hydrogen ion transport</keyword>
<keyword id="KW-0406">Ion transport</keyword>
<keyword id="KW-0472">Membrane</keyword>
<keyword id="KW-0547">Nucleotide-binding</keyword>
<keyword id="KW-0934">Plastid</keyword>
<keyword id="KW-1278">Translocase</keyword>
<keyword id="KW-0813">Transport</keyword>